<protein>
    <recommendedName>
        <fullName evidence="8">Carotenoid-cleaving dioxygenase, mitochondrial</fullName>
        <ecNumber evidence="4 5">1.13.11.-</ecNumber>
        <ecNumber evidence="4">1.13.11.71</ecNumber>
    </recommendedName>
    <alternativeName>
        <fullName evidence="2">Beta,beta-carotene 9',10'-oxygenase</fullName>
    </alternativeName>
</protein>
<proteinExistence type="evidence at protein level"/>
<evidence type="ECO:0000250" key="1">
    <source>
        <dbReference type="UniProtKB" id="Q99NF1"/>
    </source>
</evidence>
<evidence type="ECO:0000250" key="2">
    <source>
        <dbReference type="UniProtKB" id="Q9BYV7"/>
    </source>
</evidence>
<evidence type="ECO:0000250" key="3">
    <source>
        <dbReference type="UniProtKB" id="Q9JJS6"/>
    </source>
</evidence>
<evidence type="ECO:0000269" key="4">
    <source>
    </source>
</evidence>
<evidence type="ECO:0000269" key="5">
    <source>
    </source>
</evidence>
<evidence type="ECO:0000303" key="6">
    <source>
    </source>
</evidence>
<evidence type="ECO:0000305" key="7"/>
<evidence type="ECO:0000305" key="8">
    <source>
    </source>
</evidence>
<evidence type="ECO:0000305" key="9">
    <source>
    </source>
</evidence>
<evidence type="ECO:0000312" key="10">
    <source>
        <dbReference type="EMBL" id="AAS20392.1"/>
    </source>
</evidence>
<reference key="1">
    <citation type="journal article" date="2006" name="J. Biol. Chem.">
        <title>The biochemical characterization of ferret carotene-9',10'-monooxygenase catalyzing cleavage of carotenoids in vitro and in vivo.</title>
        <authorList>
            <person name="Hu K.Q."/>
            <person name="Liu C."/>
            <person name="Ernst H."/>
            <person name="Krinsky N.I."/>
            <person name="Russell R.M."/>
            <person name="Wang X.D."/>
        </authorList>
    </citation>
    <scope>NUCLEOTIDE SEQUENCE [MRNA]</scope>
    <scope>FUNCTION</scope>
    <scope>CATALYTIC ACTIVITY</scope>
    <scope>COFACTOR</scope>
    <scope>BIOPHYSICOCHEMICAL PROPERTIES</scope>
    <scope>INDUCTION BY LYCOPENE</scope>
    <scope>TISSUE SPECIFICITY</scope>
</reference>
<reference key="2">
    <citation type="journal article" date="2011" name="Arch. Biochem. Biophys.">
        <title>Enzymatic formation of apo-carotenoids from the xanthophyll carotenoids lutein, zeaxanthin and beta-cryptoxanthin by ferret carotene-9',10'-monooxygenase.</title>
        <authorList>
            <person name="Mein J.R."/>
            <person name="Dolnikowski G.G."/>
            <person name="Ernst H."/>
            <person name="Russell R.M."/>
            <person name="Wang X.D."/>
        </authorList>
    </citation>
    <scope>FUNCTION</scope>
    <scope>CATALYTIC ACTIVITY</scope>
    <scope>BIOPHYSICOCHEMICAL PROPERTIES</scope>
</reference>
<organism>
    <name type="scientific">Mustela putorius furo</name>
    <name type="common">European domestic ferret</name>
    <name type="synonym">Mustela furo</name>
    <dbReference type="NCBI Taxonomy" id="9669"/>
    <lineage>
        <taxon>Eukaryota</taxon>
        <taxon>Metazoa</taxon>
        <taxon>Chordata</taxon>
        <taxon>Craniata</taxon>
        <taxon>Vertebrata</taxon>
        <taxon>Euteleostomi</taxon>
        <taxon>Mammalia</taxon>
        <taxon>Eutheria</taxon>
        <taxon>Laurasiatheria</taxon>
        <taxon>Carnivora</taxon>
        <taxon>Caniformia</taxon>
        <taxon>Musteloidea</taxon>
        <taxon>Mustelidae</taxon>
        <taxon>Mustelinae</taxon>
        <taxon>Mustela</taxon>
    </lineage>
</organism>
<sequence length="541" mass="61162">MEGTDQKKAAVGTREGLPCIAPLLTTVEETPQVVSAQVRGHFPKWLSGSLLRIGPGKFEFGKDKYNHWFDGMALLHQFKMEKGMVTYRSKFLQSDTYKTNSVHDRIVISEFGTLALPDPCKNVFERFMSKFELPAITDNTSVNYVRYKGDYYVSTETNFMNKVDIETLEKTEKVDWSKFIAVNGATAHPHYDPDGTAYNMGNSYGLHGSCYNVIRVPPEKVDLGETLHGAQVICSIASTERMKPSYYHSFGMTRNYIIFIEQPLKMNLWKMITSRIRGMAFSDGISWEPQYNTRFHVVDKNTGQLLPGMYYSKPFVTFHQINAFEDQGCVVLDLCCQDDGRSLEAYRLQNLRKAGAGLDQVYNSVGRSFPRRFVLPLHVSLNDPEGENLSPLSYSSASAVKQANGKIWCSYENLHPEDLEEEGGVEFPQINYGQFSGKKYRFFYGCGFRHLVGDSLIKLDVVNKTLMIWREDGFYPSEPVFVPAPGASEEDGGVILSVVITPDQNENNFLLVLDAKNFEELGRAEVPVRMPYGFHGTFVTV</sequence>
<accession>Q6QT07</accession>
<gene>
    <name evidence="2" type="primary">BCO2</name>
    <name evidence="10" type="synonym">CMO</name>
    <name evidence="6" type="synonym">CMO2</name>
</gene>
<feature type="chain" id="PRO_0000454467" description="Carotenoid-cleaving dioxygenase, mitochondrial">
    <location>
        <begin position="1"/>
        <end position="541"/>
    </location>
</feature>
<feature type="binding site" evidence="3">
    <location>
        <position position="188"/>
    </location>
    <ligand>
        <name>Fe cation</name>
        <dbReference type="ChEBI" id="CHEBI:24875"/>
        <note>catalytic</note>
    </ligand>
</feature>
<feature type="binding site" evidence="3">
    <location>
        <position position="248"/>
    </location>
    <ligand>
        <name>Fe cation</name>
        <dbReference type="ChEBI" id="CHEBI:24875"/>
        <note>catalytic</note>
    </ligand>
</feature>
<feature type="binding site" evidence="3">
    <location>
        <position position="319"/>
    </location>
    <ligand>
        <name>Fe cation</name>
        <dbReference type="ChEBI" id="CHEBI:24875"/>
        <note>catalytic</note>
    </ligand>
</feature>
<feature type="binding site" evidence="3">
    <location>
        <position position="535"/>
    </location>
    <ligand>
        <name>Fe cation</name>
        <dbReference type="ChEBI" id="CHEBI:24875"/>
        <note>catalytic</note>
    </ligand>
</feature>
<comment type="function">
    <text evidence="1 4 5">Broad specificity mitochondrial dioxygenase that mediates the asymmetric oxidative cleavage of carotenoids (PubMed:16672231, PubMed:21081106). Cleaves carotenes (pure hydrocarbon carotenoids) such as all-trans-beta-carotene and lycopene as well as xanthophylls (oxygenated carotenoids) such as zeaxanthin, lutein and beta-cryptoxanthin at both the 9,10 and the 9',10' carbon-carbon double bond (PubMed:16672231, PubMed:21081106). Through its function in carotenoids metabolism regulates oxidative stress and the production of important signaling molecules (By similarity).</text>
</comment>
<comment type="catalytic activity">
    <reaction evidence="4">
        <text>all-trans-beta-carotene + O2 = beta-ionone + all-trans-10'-apo-beta-carotenal</text>
        <dbReference type="Rhea" id="RHEA:26389"/>
        <dbReference type="ChEBI" id="CHEBI:15379"/>
        <dbReference type="ChEBI" id="CHEBI:17579"/>
        <dbReference type="ChEBI" id="CHEBI:32325"/>
        <dbReference type="ChEBI" id="CHEBI:53153"/>
        <dbReference type="EC" id="1.13.11.71"/>
    </reaction>
    <physiologicalReaction direction="left-to-right" evidence="8">
        <dbReference type="Rhea" id="RHEA:26390"/>
    </physiologicalReaction>
</comment>
<comment type="catalytic activity">
    <reaction evidence="4">
        <text>5-cis-lycopene + O2 = 5-cis-10'-apo-lycopenal + (3E,5E)-6,10-dimethylundeca-3,5,9-trien-2-one</text>
        <dbReference type="Rhea" id="RHEA:68444"/>
        <dbReference type="ChEBI" id="CHEBI:15379"/>
        <dbReference type="ChEBI" id="CHEBI:67207"/>
        <dbReference type="ChEBI" id="CHEBI:177905"/>
        <dbReference type="ChEBI" id="CHEBI:177906"/>
    </reaction>
    <physiologicalReaction direction="left-to-right" evidence="8">
        <dbReference type="Rhea" id="RHEA:68445"/>
    </physiologicalReaction>
</comment>
<comment type="catalytic activity">
    <reaction evidence="4">
        <text>13-cis-lycopene + O2 = 13-cis-10'-apo-lycopenal + (3E,5E)-6,10-dimethylundeca-3,5,9-trien-2-one</text>
        <dbReference type="Rhea" id="RHEA:68448"/>
        <dbReference type="ChEBI" id="CHEBI:15379"/>
        <dbReference type="ChEBI" id="CHEBI:67207"/>
        <dbReference type="ChEBI" id="CHEBI:177907"/>
        <dbReference type="ChEBI" id="CHEBI:177908"/>
    </reaction>
    <physiologicalReaction direction="left-to-right" evidence="8">
        <dbReference type="Rhea" id="RHEA:68449"/>
    </physiologicalReaction>
</comment>
<comment type="catalytic activity">
    <reaction evidence="5">
        <text>lutein + O2 = (3R,6R)-hydroxy-alpha-ionone + (3R)-3-hydroxy-10'-apo-beta-carotenal</text>
        <dbReference type="Rhea" id="RHEA:68428"/>
        <dbReference type="ChEBI" id="CHEBI:15379"/>
        <dbReference type="ChEBI" id="CHEBI:28838"/>
        <dbReference type="ChEBI" id="CHEBI:177902"/>
        <dbReference type="ChEBI" id="CHEBI:177904"/>
    </reaction>
    <physiologicalReaction direction="left-to-right" evidence="5">
        <dbReference type="Rhea" id="RHEA:68429"/>
    </physiologicalReaction>
</comment>
<comment type="catalytic activity">
    <reaction evidence="5">
        <text>lutein + O2 = (3R,6R)-3-hydroxy-10'-apo-alpha-carotenal + (3R)-hydroxy-beta-ionone</text>
        <dbReference type="Rhea" id="RHEA:68432"/>
        <dbReference type="ChEBI" id="CHEBI:15379"/>
        <dbReference type="ChEBI" id="CHEBI:28838"/>
        <dbReference type="ChEBI" id="CHEBI:53173"/>
        <dbReference type="ChEBI" id="CHEBI:177903"/>
    </reaction>
    <physiologicalReaction direction="left-to-right" evidence="5">
        <dbReference type="Rhea" id="RHEA:68433"/>
    </physiologicalReaction>
</comment>
<comment type="catalytic activity">
    <reaction evidence="5">
        <text>all-trans-zeaxanthin + 2 O2 = 4,9-dimethyldodeca-2,4,6,8,10-pentaenedial + 2 (3R)-hydroxy-beta-ionone</text>
        <dbReference type="Rhea" id="RHEA:26393"/>
        <dbReference type="ChEBI" id="CHEBI:15379"/>
        <dbReference type="ChEBI" id="CHEBI:27547"/>
        <dbReference type="ChEBI" id="CHEBI:53171"/>
        <dbReference type="ChEBI" id="CHEBI:53173"/>
    </reaction>
    <physiologicalReaction direction="left-to-right" evidence="9">
        <dbReference type="Rhea" id="RHEA:26394"/>
    </physiologicalReaction>
</comment>
<comment type="catalytic activity">
    <reaction evidence="5">
        <text>all-trans-zeaxanthin + O2 = (3R)-3-hydroxy-10'-apo-beta-carotenal + (3R)-hydroxy-beta-ionone</text>
        <dbReference type="Rhea" id="RHEA:68104"/>
        <dbReference type="ChEBI" id="CHEBI:15379"/>
        <dbReference type="ChEBI" id="CHEBI:27547"/>
        <dbReference type="ChEBI" id="CHEBI:53173"/>
        <dbReference type="ChEBI" id="CHEBI:177902"/>
    </reaction>
    <physiologicalReaction direction="left-to-right" evidence="9">
        <dbReference type="Rhea" id="RHEA:68105"/>
    </physiologicalReaction>
</comment>
<comment type="catalytic activity">
    <reaction evidence="5">
        <text>beta-cryptoxanthin + O2 = all-trans-10'-apo-beta-carotenal + (3R)-hydroxy-beta-ionone</text>
        <dbReference type="Rhea" id="RHEA:68440"/>
        <dbReference type="ChEBI" id="CHEBI:10362"/>
        <dbReference type="ChEBI" id="CHEBI:15379"/>
        <dbReference type="ChEBI" id="CHEBI:53153"/>
        <dbReference type="ChEBI" id="CHEBI:53173"/>
    </reaction>
    <physiologicalReaction direction="left-to-right" evidence="5">
        <dbReference type="Rhea" id="RHEA:68441"/>
    </physiologicalReaction>
</comment>
<comment type="catalytic activity">
    <reaction evidence="5">
        <text>all-trans-10'-apo-beta-carotenal + O2 = beta-ionone + 4,9-dimethyldodeca-2,4,6,8,10-pentaenedial</text>
        <dbReference type="Rhea" id="RHEA:68452"/>
        <dbReference type="ChEBI" id="CHEBI:15379"/>
        <dbReference type="ChEBI" id="CHEBI:32325"/>
        <dbReference type="ChEBI" id="CHEBI:53153"/>
        <dbReference type="ChEBI" id="CHEBI:53171"/>
    </reaction>
    <physiologicalReaction direction="left-to-right" evidence="5">
        <dbReference type="Rhea" id="RHEA:68453"/>
    </physiologicalReaction>
</comment>
<comment type="catalytic activity">
    <reaction evidence="5">
        <text>(3R)-3-hydroxy-10'-apo-beta-carotenal + O2 = 4,9-dimethyldodeca-2,4,6,8,10-pentaenedial + (3R)-hydroxy-beta-ionone</text>
        <dbReference type="Rhea" id="RHEA:68424"/>
        <dbReference type="ChEBI" id="CHEBI:15379"/>
        <dbReference type="ChEBI" id="CHEBI:53171"/>
        <dbReference type="ChEBI" id="CHEBI:53173"/>
        <dbReference type="ChEBI" id="CHEBI:177902"/>
    </reaction>
    <physiologicalReaction direction="left-to-right" evidence="9">
        <dbReference type="Rhea" id="RHEA:68425"/>
    </physiologicalReaction>
</comment>
<comment type="catalytic activity">
    <reaction evidence="5">
        <text>(3R,6R)-3-hydroxy-10'-apo-alpha-carotenal + O2 = (3R,6R)-hydroxy-alpha-ionone + 4,9-dimethyldodeca-2,4,6,8,10-pentaenedial</text>
        <dbReference type="Rhea" id="RHEA:68436"/>
        <dbReference type="ChEBI" id="CHEBI:15379"/>
        <dbReference type="ChEBI" id="CHEBI:53171"/>
        <dbReference type="ChEBI" id="CHEBI:177903"/>
        <dbReference type="ChEBI" id="CHEBI:177904"/>
    </reaction>
    <physiologicalReaction direction="left-to-right" evidence="5">
        <dbReference type="Rhea" id="RHEA:68437"/>
    </physiologicalReaction>
</comment>
<comment type="cofactor">
    <cofactor evidence="8">
        <name>Fe(2+)</name>
        <dbReference type="ChEBI" id="CHEBI:29033"/>
    </cofactor>
    <text evidence="8">Binds 1 Fe(2+) ion per subunit.</text>
</comment>
<comment type="biophysicochemical properties">
    <kinetics>
        <KM evidence="4">3.5 uM for all-trans-beta-carotene</KM>
        <KM evidence="5">51.7 uM for all-trans-zeaxanthin</KM>
        <KM evidence="5">49.6 uM for lutein</KM>
        <KM evidence="5">80.8 uM for beta-cryptoxanthin</KM>
        <Vmax evidence="4">32.3 pmol/h/mg enzyme for the formation of all-trans-10'-apo-beta-carotenal</Vmax>
        <Vmax evidence="5">48.4 pmol/min/mg enzyme for the cleavage of all-trans-zeaxanthin</Vmax>
        <Vmax evidence="5">69.9 pmol/min/mg enzyme for the cleavage of lutein</Vmax>
        <Vmax evidence="5">34.3 pmol/min/mg enzyme for the cleavage of beta-cryptoxanthin</Vmax>
    </kinetics>
    <phDependence>
        <text evidence="4">Optimum pH is 8.0-8.5 with all-trans-beta-carotene as substrate.</text>
    </phDependence>
</comment>
<comment type="subcellular location">
    <subcellularLocation>
        <location evidence="1">Mitochondrion</location>
    </subcellularLocation>
</comment>
<comment type="tissue specificity">
    <text evidence="4">Widely expressed. Detected in heart, spleen, lung, intestine, colon, stomach, kidney, bladder, and prostate. Highly expressed in liver and testis (at protein level).</text>
</comment>
<comment type="induction">
    <text evidence="4">Up-regulated by lycopene.</text>
</comment>
<comment type="similarity">
    <text evidence="7">Belongs to the carotenoid oxygenase family.</text>
</comment>
<dbReference type="EC" id="1.13.11.-" evidence="4 5"/>
<dbReference type="EC" id="1.13.11.71" evidence="4"/>
<dbReference type="EMBL" id="AY527150">
    <property type="protein sequence ID" value="AAS20392.1"/>
    <property type="molecule type" value="mRNA"/>
</dbReference>
<dbReference type="RefSeq" id="NP_001297121.1">
    <property type="nucleotide sequence ID" value="NM_001310192.1"/>
</dbReference>
<dbReference type="SMR" id="Q6QT07"/>
<dbReference type="GeneID" id="101670802"/>
<dbReference type="CTD" id="83875"/>
<dbReference type="InParanoid" id="Q6QT07"/>
<dbReference type="OrthoDB" id="407010at2759"/>
<dbReference type="Proteomes" id="UP000000715">
    <property type="component" value="Unplaced"/>
</dbReference>
<dbReference type="GO" id="GO:0005739">
    <property type="term" value="C:mitochondrion"/>
    <property type="evidence" value="ECO:0000250"/>
    <property type="project" value="UniProtKB"/>
</dbReference>
<dbReference type="GO" id="GO:0010437">
    <property type="term" value="F:9,10 (9', 10')-carotenoid-cleaving dioxygenase activity"/>
    <property type="evidence" value="ECO:0000314"/>
    <property type="project" value="UniProtKB"/>
</dbReference>
<dbReference type="GO" id="GO:0102076">
    <property type="term" value="F:beta,beta-carotene-9',10'-cleaving oxygenase activity"/>
    <property type="evidence" value="ECO:0000314"/>
    <property type="project" value="UniProtKB"/>
</dbReference>
<dbReference type="GO" id="GO:0003834">
    <property type="term" value="F:beta-carotene 15,15'-dioxygenase activity"/>
    <property type="evidence" value="ECO:0007669"/>
    <property type="project" value="TreeGrafter"/>
</dbReference>
<dbReference type="GO" id="GO:0046872">
    <property type="term" value="F:metal ion binding"/>
    <property type="evidence" value="ECO:0007669"/>
    <property type="project" value="UniProtKB-KW"/>
</dbReference>
<dbReference type="GO" id="GO:0004497">
    <property type="term" value="F:monooxygenase activity"/>
    <property type="evidence" value="ECO:0007669"/>
    <property type="project" value="UniProtKB-KW"/>
</dbReference>
<dbReference type="GO" id="GO:0016121">
    <property type="term" value="P:carotene catabolic process"/>
    <property type="evidence" value="ECO:0000314"/>
    <property type="project" value="UniProtKB"/>
</dbReference>
<dbReference type="GO" id="GO:0062172">
    <property type="term" value="P:lutein catabolic process"/>
    <property type="evidence" value="ECO:0000314"/>
    <property type="project" value="UniProtKB"/>
</dbReference>
<dbReference type="GO" id="GO:1901176">
    <property type="term" value="P:lycopene catabolic process"/>
    <property type="evidence" value="ECO:0000314"/>
    <property type="project" value="UniProtKB"/>
</dbReference>
<dbReference type="GO" id="GO:0042574">
    <property type="term" value="P:retinal metabolic process"/>
    <property type="evidence" value="ECO:0007669"/>
    <property type="project" value="TreeGrafter"/>
</dbReference>
<dbReference type="GO" id="GO:0016124">
    <property type="term" value="P:xanthophyll catabolic process"/>
    <property type="evidence" value="ECO:0000314"/>
    <property type="project" value="UniProtKB"/>
</dbReference>
<dbReference type="GO" id="GO:1901826">
    <property type="term" value="P:zeaxanthin catabolic process"/>
    <property type="evidence" value="ECO:0000314"/>
    <property type="project" value="UniProtKB"/>
</dbReference>
<dbReference type="InterPro" id="IPR004294">
    <property type="entry name" value="Carotenoid_Oase"/>
</dbReference>
<dbReference type="PANTHER" id="PTHR10543">
    <property type="entry name" value="BETA-CAROTENE DIOXYGENASE"/>
    <property type="match status" value="1"/>
</dbReference>
<dbReference type="PANTHER" id="PTHR10543:SF122">
    <property type="entry name" value="CAROTENOID-CLEAVING DIOXYGENASE, MITOCHONDRIAL"/>
    <property type="match status" value="1"/>
</dbReference>
<dbReference type="Pfam" id="PF03055">
    <property type="entry name" value="RPE65"/>
    <property type="match status" value="1"/>
</dbReference>
<name>BCDO2_MUSPF</name>
<keyword id="KW-0223">Dioxygenase</keyword>
<keyword id="KW-0408">Iron</keyword>
<keyword id="KW-0443">Lipid metabolism</keyword>
<keyword id="KW-0479">Metal-binding</keyword>
<keyword id="KW-0496">Mitochondrion</keyword>
<keyword id="KW-0503">Monooxygenase</keyword>
<keyword id="KW-0560">Oxidoreductase</keyword>
<keyword id="KW-1185">Reference proteome</keyword>